<keyword id="KW-0175">Coiled coil</keyword>
<keyword id="KW-1038">Host endoplasmic reticulum</keyword>
<keyword id="KW-1040">Host Golgi apparatus</keyword>
<keyword id="KW-0378">Hydrolase</keyword>
<keyword id="KW-0460">Magnesium</keyword>
<keyword id="KW-0464">Manganese</keyword>
<keyword id="KW-0479">Metal-binding</keyword>
<keyword id="KW-0547">Nucleotide-binding</keyword>
<keyword id="KW-0548">Nucleotidyltransferase</keyword>
<keyword id="KW-1185">Reference proteome</keyword>
<keyword id="KW-0696">RNA-directed RNA polymerase</keyword>
<keyword id="KW-0808">Transferase</keyword>
<keyword id="KW-0693">Viral RNA replication</keyword>
<keyword id="KW-0946">Virion</keyword>
<keyword id="KW-0862">Zinc</keyword>
<organismHost>
    <name type="scientific">Cervidae</name>
    <name type="common">Deer</name>
    <dbReference type="NCBI Taxonomy" id="9850"/>
</organismHost>
<organismHost>
    <name type="scientific">Homo sapiens</name>
    <name type="common">Human</name>
    <dbReference type="NCBI Taxonomy" id="9606"/>
</organismHost>
<organismHost>
    <name type="scientific">Ochlerotatus triseriatus</name>
    <name type="common">Eastern treehole mosquito</name>
    <name type="synonym">Aedes triseriatus</name>
    <dbReference type="NCBI Taxonomy" id="7162"/>
</organismHost>
<organismHost>
    <name type="scientific">Tamias</name>
    <dbReference type="NCBI Taxonomy" id="13712"/>
</organismHost>
<gene>
    <name type="primary">L</name>
</gene>
<organism>
    <name type="scientific">Bunyavirus La Crosse (isolate Human/United States/L78/1978)</name>
    <dbReference type="NCBI Taxonomy" id="796210"/>
    <lineage>
        <taxon>Viruses</taxon>
        <taxon>Riboviria</taxon>
        <taxon>Orthornavirae</taxon>
        <taxon>Negarnaviricota</taxon>
        <taxon>Polyploviricotina</taxon>
        <taxon>Ellioviricetes</taxon>
        <taxon>Bunyavirales</taxon>
        <taxon>Peribunyaviridae</taxon>
        <taxon>Orthobunyavirus</taxon>
        <taxon>Orthobunyavirus lacrosseense</taxon>
    </lineage>
</organism>
<comment type="function">
    <text evidence="2 3 4">RNA-dependent RNA polymerase, which is responsible for the replication and transcription of the viral RNA genome using antigenomic RNA as an intermediate (By similarity). During transcription, synthesizes subgenomic RNAs and assures their capping by a cap-snatching mechanism, which involves the endonuclease activity cleaving the host capped pre-mRNAs (By similarity). These short capped RNAs are then used as primers for viral transcription. The 3'-end of subgenomic mRNAs molecules are not polyadenylated. During replication, the polymerase binds the 5' and 3' vRNA extremities at distinct sites (By similarity). In turn, significant conformational changes occur in the polymerase and in vRNA to initiate active RNA synthesis (By similarity). As a consequence of the use of the same enzyme for both transcription and replication, these mechanisms need to be well coordinated (By similarity).</text>
</comment>
<comment type="catalytic activity">
    <reaction evidence="4">
        <text>RNA(n) + a ribonucleoside 5'-triphosphate = RNA(n+1) + diphosphate</text>
        <dbReference type="Rhea" id="RHEA:21248"/>
        <dbReference type="Rhea" id="RHEA-COMP:14527"/>
        <dbReference type="Rhea" id="RHEA-COMP:17342"/>
        <dbReference type="ChEBI" id="CHEBI:33019"/>
        <dbReference type="ChEBI" id="CHEBI:61557"/>
        <dbReference type="ChEBI" id="CHEBI:140395"/>
        <dbReference type="EC" id="2.7.7.48"/>
    </reaction>
</comment>
<comment type="cofactor">
    <cofactor evidence="2">
        <name>Mn(2+)</name>
        <dbReference type="ChEBI" id="CHEBI:29035"/>
    </cofactor>
    <text evidence="2 8">For endonuclease activity. Binds 2 Mn(2+) ions in the active site (By similarity). The divalent metal ions are crucial for catalytic activity (PubMed:31948728).</text>
</comment>
<comment type="cofactor">
    <cofactor evidence="1">
        <name>Mg(2+)</name>
        <dbReference type="ChEBI" id="CHEBI:18420"/>
    </cofactor>
    <cofactor evidence="1">
        <name>Mn(2+)</name>
        <dbReference type="ChEBI" id="CHEBI:29035"/>
    </cofactor>
    <text evidence="1">For polymerase activity. Initiation activity is stronger in the presence of Mn(2+) than in the presence of Mg(2+).</text>
</comment>
<comment type="subunit">
    <text evidence="5">Homomultimer (By similarity). Interacts with the glycoprotein N; this interaction allows efficient polymerase packaging into virus particles (By similarity). Interacts with nucleoprotein N (By similarity).</text>
</comment>
<comment type="subcellular location">
    <subcellularLocation>
        <location evidence="3">Host Golgi apparatus</location>
    </subcellularLocation>
    <subcellularLocation>
        <location evidence="3">Host endoplasmic reticulum</location>
    </subcellularLocation>
    <subcellularLocation>
        <location evidence="3">Host endoplasmic reticulum-Golgi intermediate compartment</location>
    </subcellularLocation>
    <subcellularLocation>
        <location evidence="4">Virion</location>
    </subcellularLocation>
</comment>
<comment type="domain">
    <text evidence="1 2 3">The N-terminus contains the endonuclease activity (endoN) (By similarity). The central region contains the RdRp activity (By similarity). The C-terminus contains the cap-binding region (By similarity).</text>
</comment>
<comment type="miscellaneous">
    <text evidence="9">Classified as His(+) endonuclease since it has a histidine upstream of the active site that coordinates the first cation.</text>
</comment>
<comment type="similarity">
    <text evidence="10">Belongs to the Bunyavirales RNA polymerase family.</text>
</comment>
<name>L_BUNL8</name>
<accession>Q8JPR2</accession>
<protein>
    <recommendedName>
        <fullName>RNA-directed RNA polymerase L</fullName>
        <shortName>Protein L</shortName>
        <ecNumber evidence="3">2.7.7.48</ecNumber>
    </recommendedName>
    <alternativeName>
        <fullName>Large structural protein</fullName>
    </alternativeName>
    <alternativeName>
        <fullName>Replicase</fullName>
    </alternativeName>
    <alternativeName>
        <fullName>Transcriptase</fullName>
    </alternativeName>
    <domain>
        <recommendedName>
            <fullName>cap-snatching endonuclease</fullName>
            <ecNumber evidence="2">3.1.-.-</ecNumber>
        </recommendedName>
    </domain>
</protein>
<feature type="chain" id="PRO_0000397189" description="RNA-directed RNA polymerase L">
    <location>
        <begin position="1"/>
        <end position="2263"/>
    </location>
</feature>
<feature type="domain" description="RdRp catalytic" evidence="7">
    <location>
        <begin position="1042"/>
        <end position="1230"/>
    </location>
</feature>
<feature type="region of interest" description="Endonuclease" evidence="2">
    <location>
        <begin position="1"/>
        <end position="185"/>
    </location>
</feature>
<feature type="region of interest" description="Cap-binding" evidence="2">
    <location>
        <begin position="1841"/>
        <end position="1977"/>
    </location>
</feature>
<feature type="coiled-coil region" evidence="6">
    <location>
        <begin position="1003"/>
        <end position="1033"/>
    </location>
</feature>
<feature type="binding site" evidence="2">
    <location>
        <position position="34"/>
    </location>
    <ligand>
        <name>Mn(2+)</name>
        <dbReference type="ChEBI" id="CHEBI:29035"/>
        <label>1</label>
    </ligand>
</feature>
<feature type="binding site" evidence="2">
    <location>
        <position position="52"/>
    </location>
    <ligand>
        <name>Mn(2+)</name>
        <dbReference type="ChEBI" id="CHEBI:29035"/>
        <label>2</label>
    </ligand>
</feature>
<feature type="binding site" evidence="2">
    <location>
        <position position="79"/>
    </location>
    <ligand>
        <name>Mn(2+)</name>
        <dbReference type="ChEBI" id="CHEBI:29035"/>
        <label>1</label>
    </ligand>
</feature>
<feature type="binding site" evidence="2">
    <location>
        <position position="79"/>
    </location>
    <ligand>
        <name>Mn(2+)</name>
        <dbReference type="ChEBI" id="CHEBI:29035"/>
        <label>2</label>
    </ligand>
</feature>
<feature type="binding site" evidence="2">
    <location>
        <position position="92"/>
    </location>
    <ligand>
        <name>Mn(2+)</name>
        <dbReference type="ChEBI" id="CHEBI:29035"/>
        <label>1</label>
    </ligand>
</feature>
<feature type="binding site" evidence="2">
    <location>
        <position position="93"/>
    </location>
    <ligand>
        <name>Mn(2+)</name>
        <dbReference type="ChEBI" id="CHEBI:29035"/>
        <label>1</label>
    </ligand>
</feature>
<feature type="binding site" evidence="3">
    <location>
        <position position="1188"/>
    </location>
    <ligand>
        <name>Mg(2+)</name>
        <dbReference type="ChEBI" id="CHEBI:18420"/>
        <note>catalytic; for RdRp activity</note>
    </ligand>
</feature>
<feature type="binding site" evidence="2">
    <location>
        <position position="2064"/>
    </location>
    <ligand>
        <name>Zn(2+)</name>
        <dbReference type="ChEBI" id="CHEBI:29105"/>
    </ligand>
</feature>
<feature type="binding site" evidence="2">
    <location>
        <position position="2169"/>
    </location>
    <ligand>
        <name>Zn(2+)</name>
        <dbReference type="ChEBI" id="CHEBI:29105"/>
    </ligand>
</feature>
<feature type="binding site" evidence="2">
    <location>
        <position position="2178"/>
    </location>
    <ligand>
        <name>Zn(2+)</name>
        <dbReference type="ChEBI" id="CHEBI:29105"/>
    </ligand>
</feature>
<feature type="binding site" evidence="2">
    <location>
        <position position="2182"/>
    </location>
    <ligand>
        <name>Zn(2+)</name>
        <dbReference type="ChEBI" id="CHEBI:29105"/>
    </ligand>
</feature>
<dbReference type="EC" id="2.7.7.48" evidence="3"/>
<dbReference type="EC" id="3.1.-.-" evidence="2"/>
<dbReference type="EMBL" id="AF528165">
    <property type="protein sequence ID" value="AAM94387.1"/>
    <property type="molecule type" value="Genomic_RNA"/>
</dbReference>
<dbReference type="EMBL" id="EF485035">
    <property type="protein sequence ID" value="ABQ12635.1"/>
    <property type="molecule type" value="Viral_cRNA"/>
</dbReference>
<dbReference type="SMR" id="Q8JPR2"/>
<dbReference type="KEGG" id="vg:956554"/>
<dbReference type="Proteomes" id="UP000008768">
    <property type="component" value="Genome"/>
</dbReference>
<dbReference type="Proteomes" id="UP000121242">
    <property type="component" value="Genome"/>
</dbReference>
<dbReference type="GO" id="GO:0044165">
    <property type="term" value="C:host cell endoplasmic reticulum"/>
    <property type="evidence" value="ECO:0007669"/>
    <property type="project" value="UniProtKB-SubCell"/>
</dbReference>
<dbReference type="GO" id="GO:0044172">
    <property type="term" value="C:host cell endoplasmic reticulum-Golgi intermediate compartment"/>
    <property type="evidence" value="ECO:0007669"/>
    <property type="project" value="UniProtKB-SubCell"/>
</dbReference>
<dbReference type="GO" id="GO:0044177">
    <property type="term" value="C:host cell Golgi apparatus"/>
    <property type="evidence" value="ECO:0007669"/>
    <property type="project" value="UniProtKB-SubCell"/>
</dbReference>
<dbReference type="GO" id="GO:0044423">
    <property type="term" value="C:virion component"/>
    <property type="evidence" value="ECO:0007669"/>
    <property type="project" value="UniProtKB-KW"/>
</dbReference>
<dbReference type="GO" id="GO:0016787">
    <property type="term" value="F:hydrolase activity"/>
    <property type="evidence" value="ECO:0007669"/>
    <property type="project" value="UniProtKB-KW"/>
</dbReference>
<dbReference type="GO" id="GO:0046872">
    <property type="term" value="F:metal ion binding"/>
    <property type="evidence" value="ECO:0007669"/>
    <property type="project" value="UniProtKB-KW"/>
</dbReference>
<dbReference type="GO" id="GO:0000166">
    <property type="term" value="F:nucleotide binding"/>
    <property type="evidence" value="ECO:0007669"/>
    <property type="project" value="UniProtKB-KW"/>
</dbReference>
<dbReference type="GO" id="GO:0003968">
    <property type="term" value="F:RNA-directed RNA polymerase activity"/>
    <property type="evidence" value="ECO:0007669"/>
    <property type="project" value="UniProtKB-KW"/>
</dbReference>
<dbReference type="GO" id="GO:0006351">
    <property type="term" value="P:DNA-templated transcription"/>
    <property type="evidence" value="ECO:0007669"/>
    <property type="project" value="InterPro"/>
</dbReference>
<dbReference type="GO" id="GO:0039689">
    <property type="term" value="P:negative stranded viral RNA replication"/>
    <property type="evidence" value="ECO:0000314"/>
    <property type="project" value="UniProtKB"/>
</dbReference>
<dbReference type="GO" id="GO:0039696">
    <property type="term" value="P:RNA-templated viral transcription"/>
    <property type="evidence" value="ECO:0000314"/>
    <property type="project" value="UniProtKB"/>
</dbReference>
<dbReference type="CDD" id="cd22349">
    <property type="entry name" value="PDDEXK_RNA_polymerase-like"/>
    <property type="match status" value="1"/>
</dbReference>
<dbReference type="FunFam" id="3.40.91.60:FF:000001">
    <property type="entry name" value="RNA-directed RNA polymerase L"/>
    <property type="match status" value="1"/>
</dbReference>
<dbReference type="Gene3D" id="3.40.91.60">
    <property type="match status" value="1"/>
</dbReference>
<dbReference type="InterPro" id="IPR048006">
    <property type="entry name" value="CapSnatch_bunyavir"/>
</dbReference>
<dbReference type="InterPro" id="IPR029124">
    <property type="entry name" value="L_protein_N"/>
</dbReference>
<dbReference type="InterPro" id="IPR048547">
    <property type="entry name" value="L_thumb_ring_bunyavir"/>
</dbReference>
<dbReference type="InterPro" id="IPR007099">
    <property type="entry name" value="RNA-dir_pol_NSvirus"/>
</dbReference>
<dbReference type="InterPro" id="IPR014384">
    <property type="entry name" value="RNA-dir_pol_orthobunyavirus"/>
</dbReference>
<dbReference type="InterPro" id="IPR007322">
    <property type="entry name" value="RNA_pol_bunyavir"/>
</dbReference>
<dbReference type="NCBIfam" id="TIGR04202">
    <property type="entry name" value="capSnatchArena"/>
    <property type="match status" value="1"/>
</dbReference>
<dbReference type="Pfam" id="PF04196">
    <property type="entry name" value="Bunya_RdRp"/>
    <property type="match status" value="1"/>
</dbReference>
<dbReference type="Pfam" id="PF15518">
    <property type="entry name" value="L_protein_N"/>
    <property type="match status" value="1"/>
</dbReference>
<dbReference type="Pfam" id="PF21561">
    <property type="entry name" value="L_thumb_ring_vir"/>
    <property type="match status" value="1"/>
</dbReference>
<dbReference type="PIRSF" id="PIRSF000824">
    <property type="entry name" value="L_OrthobunV"/>
    <property type="match status" value="1"/>
</dbReference>
<dbReference type="PROSITE" id="PS50525">
    <property type="entry name" value="RDRP_SSRNA_NEG_SEG"/>
    <property type="match status" value="1"/>
</dbReference>
<evidence type="ECO:0000250" key="1">
    <source>
        <dbReference type="UniProtKB" id="A2SZS3"/>
    </source>
</evidence>
<evidence type="ECO:0000250" key="2">
    <source>
        <dbReference type="UniProtKB" id="A5HC98"/>
    </source>
</evidence>
<evidence type="ECO:0000250" key="3">
    <source>
        <dbReference type="UniProtKB" id="I0DF35"/>
    </source>
</evidence>
<evidence type="ECO:0000250" key="4">
    <source>
        <dbReference type="UniProtKB" id="P20470"/>
    </source>
</evidence>
<evidence type="ECO:0000250" key="5">
    <source>
        <dbReference type="UniProtKB" id="P27316"/>
    </source>
</evidence>
<evidence type="ECO:0000255" key="6"/>
<evidence type="ECO:0000255" key="7">
    <source>
        <dbReference type="PROSITE-ProRule" id="PRU00539"/>
    </source>
</evidence>
<evidence type="ECO:0000269" key="8">
    <source>
    </source>
</evidence>
<evidence type="ECO:0000303" key="9">
    <source>
    </source>
</evidence>
<evidence type="ECO:0000305" key="10"/>
<reference key="1">
    <citation type="submission" date="2002-07" db="EMBL/GenBank/DDBJ databases">
        <title>Complete sequence of the Bunyavirus, La Crosse virus, Human/78 strain.</title>
        <authorList>
            <person name="Hughes M.T."/>
            <person name="Kempf B.J."/>
            <person name="Blair C.D."/>
            <person name="Beaty B.J."/>
        </authorList>
    </citation>
    <scope>NUCLEOTIDE SEQUENCE [GENOMIC RNA]</scope>
</reference>
<reference key="2">
    <citation type="journal article" date="2007" name="Virol. J.">
        <title>Genome sequence analysis of La Crosse virus and in vitro and in vivo phenotypes.</title>
        <authorList>
            <person name="Bennett R.S."/>
            <person name="Ton D.R."/>
            <person name="Hanson C.T."/>
            <person name="Murphy B.R."/>
            <person name="Whitehead S.S."/>
        </authorList>
    </citation>
    <scope>NUCLEOTIDE SEQUENCE [GENOMIC RNA]</scope>
</reference>
<reference key="3">
    <citation type="journal article" date="2017" name="Crit. Rev. Microbiol.">
        <title>Bunyaviridae RdRps: structure, motifs, and RNA synthesis machinery.</title>
        <authorList>
            <person name="Amroun A."/>
            <person name="Priet S."/>
            <person name="de Lamballerie X."/>
            <person name="Querat G."/>
        </authorList>
    </citation>
    <scope>REVIEW</scope>
</reference>
<reference key="4">
    <citation type="journal article" date="2020" name="Trends Microbiol.">
        <title>The Cap-Snatching Mechanism of Bunyaviruses.</title>
        <authorList>
            <person name="Olschewski S."/>
            <person name="Cusack S."/>
            <person name="Rosenthal M."/>
        </authorList>
    </citation>
    <scope>REVIEW</scope>
</reference>
<proteinExistence type="inferred from homology"/>
<sequence length="2263" mass="263013">MDYQEYQQFLARINTARDACVAKDIDVDLLMARHDYFGRELCKSLNIEYRNDVPFVDIILDIRPEVDPLTIDAPHITPDNYLYINNVLYIIDYKVSVSNESSVITYDKYYELTRDISDRLSIPIEIVIVRIDPVSKDLHINSDRFKELYPTIVVDINFNQFFDLKQLLYEKFGDDEEFLLKVAHGDFTLTAPWCKTGCPEFWKHPIYKEFKMSMPVPERRLFEESVKFNAYESERWNTNLVKIREYTKKDYSEHISKSAKNIFLASGFYKQPNKNEISEGWTLMVERVQDQREISKSLHDQKPSIHFIWGAHNPGNSNNATFKLILLSKSLQSIKGISTYTEAFKSLGKMMDIGDKAIEYEEFCMSLKSKARSSWKQIMNKKLEPKQINNALVLWEQQFMVNNDLIDKSEKLKLFKNFCGIGKHKQFKNKMLEDLEVSKPKILDFDDANMYLASLTMMEQSKKILSKSNGLKPDNFILNEFGSKIKDANKETYDNMHKIFETRYWQCISDFSTLMKNILSVSQYNRHNTFRIAMCANNNVFAIVFPSADIKTKKATVVYSIIVLHKEEENIFNPGCLHGTFKCMNGYISISRAIRLDKERCQRIVSSPGLFLTTCLLFKHDNPTLVMSDIMNFSIYTSLSITKSVLSLTEPARYMIMNSLAISSNVKDYIAEKFSPYTKTLFSVYMTRLIKNACFDAYDQRQRVQLRDIYLSDYDITQKGIKDNRELTSIWFPGSVTLKEYLTQIYLPFYFNAKGLHEKHHVMVDLAKTILEIECEQRENIKEIWSTNCTKQTVNLKILIHSLCKNLLADTSRHNHLRNRIENRNNFRRSITTISTFTSSKSCLKIGDFRKEKELQSVKQKKILEVQSRKMRLANPMFVTDEQVCLEVGHCNYEMLRNAMPNYTDYISTKVFDRLYELLDKGVLTDKPVIEQIMDMMVDHKKFYFTFFNKGQKTSKDREIFVGEYEAKMCMYAVERIAKERCKLNPDEMISEPGDGKLKVLEQKSEQEIRFLVETTRQKNREIDEAIEALAAEGYESNLEKIEKLSLGKAKGLKMEINADMSKWSAQDVFYKYFWLIALDPILYPQEKERILYFMCNYMDKELILPDELLFNLLDQKVAYQNDIIATMTNQLNSNTVLIKRNWLQGNFNYTSSYVHSCAMSVYKEILKEAITLLDGSILVNSLVHSDDNQTSITIVQDKMENDKIIDFAMKEFERACLTFGCQANMKKTYVTNCIKEFVSLFNLYGEPFSIYGRFLLTSVGDCAYIGPYEDLASRISSAQTAIKHGCPPSLAWVSIAISHWMTSLTYNMLPGQSNDPIDYFPAENRKDIPIELNGVLDAPLSMISTVGLESGNLYFLIKLLSKYTPVMQKRESVVNQIAEVKNWKVEDLTDNEIFRLKILRYLVLDAEMDPSDIMGETSDMRGRSILTPRKFTTAGSLRKLYSFSKYQDRLSSPGGMVELFTYLLEKPELLVTKGEDMKDYMESVIFRYNSKRFKESLSIQNPAQLFIEQILFSHKPIIDFSGIRDKYINLHDSRALEKEPDILGKVTFTEAYRLLMRDLSSLELTNDDIQVIYSYIILNDPMMITIANTHILSIYGSPQRRMGMSCSTMPEFRNLKLIHHSPALVLRAYSKNNPDIQGADPTEMARDLVHLKEFVENTNLEEKMKVRIAINEAEKGQRDIVFELKEMTRFYQVCYEYVKSTEHKIKVFILPTKSYTTTDFCSLMQGNLIKDKEWYTVHYLKQILSGGHKAIMQHNATSEQNIAFECFKLITHFADSFIDSLSRSAFLQLIIDEFSYKDVKVSKLYDIIKNGYNRTDFIPLLFRTGDLRQADLDKYDAMKSHERVTWNDWQTSRHLDMGSINLTITGYNRSITIIGEDNKLTYAELCLTRKTPENITISGRKLLGARHGLKFENMSKIQTYPGNYYITYRKKDRHQFVYQIHSHESITRRNEEHMAIRTRIYNEITPVCVVNVAEVDGDQRILIRSLDYLNNDIFSLSRIKVGLDEFATIKKAHFSKMVSFEGPPIKTGLLDLTELMKSQDLLNLNYDNIRNSNLISFSKLICCEGSDNINDGLEFLSDDPMNFTEGEAIHSTPIFNIYYSKRGERHMTYRNAIKLLIERETKIFEEAFTFSENGFISPENLGCLEAVVSLIKLLKTNEWSTVIDKCIHICLIKNGMDHMYHSFDVPKCFMGNPITRDMNWMMFREFINSLPGTDIPPWNVMTENFKKKCIALINSKLETQRDFSEFTKLMKKEGGRSNIEFD</sequence>